<name>EFG_COXBR</name>
<protein>
    <recommendedName>
        <fullName evidence="1">Elongation factor G</fullName>
        <shortName evidence="1">EF-G</shortName>
    </recommendedName>
</protein>
<comment type="function">
    <text evidence="1">Catalyzes the GTP-dependent ribosomal translocation step during translation elongation. During this step, the ribosome changes from the pre-translocational (PRE) to the post-translocational (POST) state as the newly formed A-site-bound peptidyl-tRNA and P-site-bound deacylated tRNA move to the P and E sites, respectively. Catalyzes the coordinated movement of the two tRNA molecules, the mRNA and conformational changes in the ribosome.</text>
</comment>
<comment type="subcellular location">
    <subcellularLocation>
        <location evidence="1">Cytoplasm</location>
    </subcellularLocation>
</comment>
<comment type="similarity">
    <text evidence="1">Belongs to the TRAFAC class translation factor GTPase superfamily. Classic translation factor GTPase family. EF-G/EF-2 subfamily.</text>
</comment>
<keyword id="KW-0963">Cytoplasm</keyword>
<keyword id="KW-0251">Elongation factor</keyword>
<keyword id="KW-0342">GTP-binding</keyword>
<keyword id="KW-0547">Nucleotide-binding</keyword>
<keyword id="KW-0648">Protein biosynthesis</keyword>
<evidence type="ECO:0000255" key="1">
    <source>
        <dbReference type="HAMAP-Rule" id="MF_00054"/>
    </source>
</evidence>
<evidence type="ECO:0000256" key="2">
    <source>
        <dbReference type="SAM" id="MobiDB-lite"/>
    </source>
</evidence>
<gene>
    <name evidence="1" type="primary">fusA</name>
    <name type="ordered locus">COXBURSA331_A0334</name>
</gene>
<reference key="1">
    <citation type="submission" date="2007-11" db="EMBL/GenBank/DDBJ databases">
        <title>Genome sequencing of phylogenetically and phenotypically diverse Coxiella burnetii isolates.</title>
        <authorList>
            <person name="Seshadri R."/>
            <person name="Samuel J.E."/>
        </authorList>
    </citation>
    <scope>NUCLEOTIDE SEQUENCE [LARGE SCALE GENOMIC DNA]</scope>
    <source>
        <strain>RSA 331 / Henzerling II</strain>
    </source>
</reference>
<organism>
    <name type="scientific">Coxiella burnetii (strain RSA 331 / Henzerling II)</name>
    <dbReference type="NCBI Taxonomy" id="360115"/>
    <lineage>
        <taxon>Bacteria</taxon>
        <taxon>Pseudomonadati</taxon>
        <taxon>Pseudomonadota</taxon>
        <taxon>Gammaproteobacteria</taxon>
        <taxon>Legionellales</taxon>
        <taxon>Coxiellaceae</taxon>
        <taxon>Coxiella</taxon>
    </lineage>
</organism>
<feature type="chain" id="PRO_1000074955" description="Elongation factor G">
    <location>
        <begin position="1"/>
        <end position="699"/>
    </location>
</feature>
<feature type="domain" description="tr-type G">
    <location>
        <begin position="10"/>
        <end position="292"/>
    </location>
</feature>
<feature type="region of interest" description="Disordered" evidence="2">
    <location>
        <begin position="292"/>
        <end position="312"/>
    </location>
</feature>
<feature type="binding site" evidence="1">
    <location>
        <begin position="19"/>
        <end position="26"/>
    </location>
    <ligand>
        <name>GTP</name>
        <dbReference type="ChEBI" id="CHEBI:37565"/>
    </ligand>
</feature>
<feature type="binding site" evidence="1">
    <location>
        <begin position="90"/>
        <end position="94"/>
    </location>
    <ligand>
        <name>GTP</name>
        <dbReference type="ChEBI" id="CHEBI:37565"/>
    </ligand>
</feature>
<feature type="binding site" evidence="1">
    <location>
        <begin position="144"/>
        <end position="147"/>
    </location>
    <ligand>
        <name>GTP</name>
        <dbReference type="ChEBI" id="CHEBI:37565"/>
    </ligand>
</feature>
<proteinExistence type="inferred from homology"/>
<accession>A9NAM1</accession>
<dbReference type="EMBL" id="CP000890">
    <property type="protein sequence ID" value="ABX77862.1"/>
    <property type="molecule type" value="Genomic_DNA"/>
</dbReference>
<dbReference type="RefSeq" id="WP_010957451.1">
    <property type="nucleotide sequence ID" value="NC_010117.1"/>
</dbReference>
<dbReference type="SMR" id="A9NAM1"/>
<dbReference type="KEGG" id="cbs:COXBURSA331_A0334"/>
<dbReference type="HOGENOM" id="CLU_002794_4_1_6"/>
<dbReference type="GO" id="GO:0005737">
    <property type="term" value="C:cytoplasm"/>
    <property type="evidence" value="ECO:0007669"/>
    <property type="project" value="UniProtKB-SubCell"/>
</dbReference>
<dbReference type="GO" id="GO:0005525">
    <property type="term" value="F:GTP binding"/>
    <property type="evidence" value="ECO:0007669"/>
    <property type="project" value="UniProtKB-UniRule"/>
</dbReference>
<dbReference type="GO" id="GO:0003924">
    <property type="term" value="F:GTPase activity"/>
    <property type="evidence" value="ECO:0007669"/>
    <property type="project" value="InterPro"/>
</dbReference>
<dbReference type="GO" id="GO:0097216">
    <property type="term" value="F:guanosine tetraphosphate binding"/>
    <property type="evidence" value="ECO:0007669"/>
    <property type="project" value="UniProtKB-ARBA"/>
</dbReference>
<dbReference type="GO" id="GO:0003746">
    <property type="term" value="F:translation elongation factor activity"/>
    <property type="evidence" value="ECO:0007669"/>
    <property type="project" value="UniProtKB-UniRule"/>
</dbReference>
<dbReference type="GO" id="GO:0032790">
    <property type="term" value="P:ribosome disassembly"/>
    <property type="evidence" value="ECO:0007669"/>
    <property type="project" value="TreeGrafter"/>
</dbReference>
<dbReference type="CDD" id="cd01886">
    <property type="entry name" value="EF-G"/>
    <property type="match status" value="1"/>
</dbReference>
<dbReference type="CDD" id="cd16262">
    <property type="entry name" value="EFG_III"/>
    <property type="match status" value="1"/>
</dbReference>
<dbReference type="CDD" id="cd01434">
    <property type="entry name" value="EFG_mtEFG1_IV"/>
    <property type="match status" value="1"/>
</dbReference>
<dbReference type="CDD" id="cd03713">
    <property type="entry name" value="EFG_mtEFG_C"/>
    <property type="match status" value="1"/>
</dbReference>
<dbReference type="CDD" id="cd04088">
    <property type="entry name" value="EFG_mtEFG_II"/>
    <property type="match status" value="1"/>
</dbReference>
<dbReference type="FunFam" id="2.40.30.10:FF:000006">
    <property type="entry name" value="Elongation factor G"/>
    <property type="match status" value="1"/>
</dbReference>
<dbReference type="FunFam" id="3.30.230.10:FF:000003">
    <property type="entry name" value="Elongation factor G"/>
    <property type="match status" value="1"/>
</dbReference>
<dbReference type="FunFam" id="3.30.70.240:FF:000001">
    <property type="entry name" value="Elongation factor G"/>
    <property type="match status" value="1"/>
</dbReference>
<dbReference type="FunFam" id="3.30.70.870:FF:000001">
    <property type="entry name" value="Elongation factor G"/>
    <property type="match status" value="1"/>
</dbReference>
<dbReference type="FunFam" id="3.40.50.300:FF:000029">
    <property type="entry name" value="Elongation factor G"/>
    <property type="match status" value="1"/>
</dbReference>
<dbReference type="Gene3D" id="3.30.230.10">
    <property type="match status" value="1"/>
</dbReference>
<dbReference type="Gene3D" id="3.30.70.240">
    <property type="match status" value="1"/>
</dbReference>
<dbReference type="Gene3D" id="3.30.70.870">
    <property type="entry name" value="Elongation Factor G (Translational Gtpase), domain 3"/>
    <property type="match status" value="1"/>
</dbReference>
<dbReference type="Gene3D" id="3.40.50.300">
    <property type="entry name" value="P-loop containing nucleotide triphosphate hydrolases"/>
    <property type="match status" value="1"/>
</dbReference>
<dbReference type="Gene3D" id="2.40.30.10">
    <property type="entry name" value="Translation factors"/>
    <property type="match status" value="1"/>
</dbReference>
<dbReference type="HAMAP" id="MF_00054_B">
    <property type="entry name" value="EF_G_EF_2_B"/>
    <property type="match status" value="1"/>
</dbReference>
<dbReference type="InterPro" id="IPR041095">
    <property type="entry name" value="EFG_II"/>
</dbReference>
<dbReference type="InterPro" id="IPR009022">
    <property type="entry name" value="EFG_III"/>
</dbReference>
<dbReference type="InterPro" id="IPR035647">
    <property type="entry name" value="EFG_III/V"/>
</dbReference>
<dbReference type="InterPro" id="IPR047872">
    <property type="entry name" value="EFG_IV"/>
</dbReference>
<dbReference type="InterPro" id="IPR035649">
    <property type="entry name" value="EFG_V"/>
</dbReference>
<dbReference type="InterPro" id="IPR000640">
    <property type="entry name" value="EFG_V-like"/>
</dbReference>
<dbReference type="InterPro" id="IPR004161">
    <property type="entry name" value="EFTu-like_2"/>
</dbReference>
<dbReference type="InterPro" id="IPR031157">
    <property type="entry name" value="G_TR_CS"/>
</dbReference>
<dbReference type="InterPro" id="IPR027417">
    <property type="entry name" value="P-loop_NTPase"/>
</dbReference>
<dbReference type="InterPro" id="IPR020568">
    <property type="entry name" value="Ribosomal_Su5_D2-typ_SF"/>
</dbReference>
<dbReference type="InterPro" id="IPR014721">
    <property type="entry name" value="Ribsml_uS5_D2-typ_fold_subgr"/>
</dbReference>
<dbReference type="InterPro" id="IPR005225">
    <property type="entry name" value="Small_GTP-bd"/>
</dbReference>
<dbReference type="InterPro" id="IPR000795">
    <property type="entry name" value="T_Tr_GTP-bd_dom"/>
</dbReference>
<dbReference type="InterPro" id="IPR009000">
    <property type="entry name" value="Transl_B-barrel_sf"/>
</dbReference>
<dbReference type="InterPro" id="IPR004540">
    <property type="entry name" value="Transl_elong_EFG/EF2"/>
</dbReference>
<dbReference type="InterPro" id="IPR005517">
    <property type="entry name" value="Transl_elong_EFG/EF2_IV"/>
</dbReference>
<dbReference type="NCBIfam" id="TIGR00484">
    <property type="entry name" value="EF-G"/>
    <property type="match status" value="1"/>
</dbReference>
<dbReference type="NCBIfam" id="NF009379">
    <property type="entry name" value="PRK12740.1-3"/>
    <property type="match status" value="1"/>
</dbReference>
<dbReference type="NCBIfam" id="NF009381">
    <property type="entry name" value="PRK12740.1-5"/>
    <property type="match status" value="1"/>
</dbReference>
<dbReference type="NCBIfam" id="TIGR00231">
    <property type="entry name" value="small_GTP"/>
    <property type="match status" value="1"/>
</dbReference>
<dbReference type="PANTHER" id="PTHR43261:SF1">
    <property type="entry name" value="RIBOSOME-RELEASING FACTOR 2, MITOCHONDRIAL"/>
    <property type="match status" value="1"/>
</dbReference>
<dbReference type="PANTHER" id="PTHR43261">
    <property type="entry name" value="TRANSLATION ELONGATION FACTOR G-RELATED"/>
    <property type="match status" value="1"/>
</dbReference>
<dbReference type="Pfam" id="PF00679">
    <property type="entry name" value="EFG_C"/>
    <property type="match status" value="1"/>
</dbReference>
<dbReference type="Pfam" id="PF14492">
    <property type="entry name" value="EFG_III"/>
    <property type="match status" value="1"/>
</dbReference>
<dbReference type="Pfam" id="PF03764">
    <property type="entry name" value="EFG_IV"/>
    <property type="match status" value="1"/>
</dbReference>
<dbReference type="Pfam" id="PF00009">
    <property type="entry name" value="GTP_EFTU"/>
    <property type="match status" value="1"/>
</dbReference>
<dbReference type="Pfam" id="PF03144">
    <property type="entry name" value="GTP_EFTU_D2"/>
    <property type="match status" value="1"/>
</dbReference>
<dbReference type="PRINTS" id="PR00315">
    <property type="entry name" value="ELONGATNFCT"/>
</dbReference>
<dbReference type="SMART" id="SM00838">
    <property type="entry name" value="EFG_C"/>
    <property type="match status" value="1"/>
</dbReference>
<dbReference type="SMART" id="SM00889">
    <property type="entry name" value="EFG_IV"/>
    <property type="match status" value="1"/>
</dbReference>
<dbReference type="SUPFAM" id="SSF54980">
    <property type="entry name" value="EF-G C-terminal domain-like"/>
    <property type="match status" value="2"/>
</dbReference>
<dbReference type="SUPFAM" id="SSF52540">
    <property type="entry name" value="P-loop containing nucleoside triphosphate hydrolases"/>
    <property type="match status" value="1"/>
</dbReference>
<dbReference type="SUPFAM" id="SSF54211">
    <property type="entry name" value="Ribosomal protein S5 domain 2-like"/>
    <property type="match status" value="1"/>
</dbReference>
<dbReference type="SUPFAM" id="SSF50447">
    <property type="entry name" value="Translation proteins"/>
    <property type="match status" value="1"/>
</dbReference>
<dbReference type="PROSITE" id="PS00301">
    <property type="entry name" value="G_TR_1"/>
    <property type="match status" value="1"/>
</dbReference>
<dbReference type="PROSITE" id="PS51722">
    <property type="entry name" value="G_TR_2"/>
    <property type="match status" value="1"/>
</dbReference>
<sequence length="699" mass="77733">MATAREIPLNRTRNIGIMAHIDAGKTTTTERVLYYTGVSHKMGEVHEGSAVMDWMEQEQERGITITSAATTCYWLGMDQQYPKHRINIIDTPGHVDFTIEVERSLRVLDGAVAVFCSVGGVEPQSETVWRQANRYHVPRLGFVNKMDRAGANFLRVVNQVKDRLNANPIPIQLPIGAEEDFKGVIDLIREKAIYWNEADRGRTYELADIPEDMKAEVQKWREKMIEAAAESSEELMDKYLEAGDLSPEQIRQGLRQRTLANEIVPILCGSAFKNKGVQALLDAVIDYLPSPTDVPAIRGEEDDGSEGSRSASDDEPFAALAFKIASDPFVGTLTFFRVYSGILKSGDSVYNPIKGKKERIGRLLQMHSNSREEIKEVRAGDIAAAVGLKTVTTGDTICNQQNIITLEKMDFPEPVISVAIEPKTKADQEKMGVALGKLAQEDPSFRVHTDEESAQTIIEGMGELHLEIIVDRMRREFNVEANVGKPRVAYRETIRRSVEQQGKYIRQTGGRGQYGDVWLRIEPREPGAGFEFENAIVGGVVPREYIPAVEKGVREQMENGIRAGYPVVDVKVTIFEGSYHDVDSSEMAFKIAGSMAFKEGASKADPVLLEPIMKVEVVTPEEYMGDVVGDLNRRRGMIQGMDESPAGKIVDVEVPLAEMFGYATDLRSLSQGRATYTMEFLKYAEAPSNIAEAIIKQQS</sequence>